<evidence type="ECO:0000255" key="1">
    <source>
        <dbReference type="HAMAP-Rule" id="MF_01227"/>
    </source>
</evidence>
<comment type="function">
    <text evidence="1">Catalyzes the ATP-dependent amination of UTP to CTP with either L-glutamine or ammonia as the source of nitrogen. Regulates intracellular CTP levels through interactions with the four ribonucleotide triphosphates.</text>
</comment>
<comment type="catalytic activity">
    <reaction evidence="1">
        <text>UTP + L-glutamine + ATP + H2O = CTP + L-glutamate + ADP + phosphate + 2 H(+)</text>
        <dbReference type="Rhea" id="RHEA:26426"/>
        <dbReference type="ChEBI" id="CHEBI:15377"/>
        <dbReference type="ChEBI" id="CHEBI:15378"/>
        <dbReference type="ChEBI" id="CHEBI:29985"/>
        <dbReference type="ChEBI" id="CHEBI:30616"/>
        <dbReference type="ChEBI" id="CHEBI:37563"/>
        <dbReference type="ChEBI" id="CHEBI:43474"/>
        <dbReference type="ChEBI" id="CHEBI:46398"/>
        <dbReference type="ChEBI" id="CHEBI:58359"/>
        <dbReference type="ChEBI" id="CHEBI:456216"/>
        <dbReference type="EC" id="6.3.4.2"/>
    </reaction>
</comment>
<comment type="catalytic activity">
    <reaction evidence="1">
        <text>L-glutamine + H2O = L-glutamate + NH4(+)</text>
        <dbReference type="Rhea" id="RHEA:15889"/>
        <dbReference type="ChEBI" id="CHEBI:15377"/>
        <dbReference type="ChEBI" id="CHEBI:28938"/>
        <dbReference type="ChEBI" id="CHEBI:29985"/>
        <dbReference type="ChEBI" id="CHEBI:58359"/>
    </reaction>
</comment>
<comment type="catalytic activity">
    <reaction evidence="1">
        <text>UTP + NH4(+) + ATP = CTP + ADP + phosphate + 2 H(+)</text>
        <dbReference type="Rhea" id="RHEA:16597"/>
        <dbReference type="ChEBI" id="CHEBI:15378"/>
        <dbReference type="ChEBI" id="CHEBI:28938"/>
        <dbReference type="ChEBI" id="CHEBI:30616"/>
        <dbReference type="ChEBI" id="CHEBI:37563"/>
        <dbReference type="ChEBI" id="CHEBI:43474"/>
        <dbReference type="ChEBI" id="CHEBI:46398"/>
        <dbReference type="ChEBI" id="CHEBI:456216"/>
    </reaction>
</comment>
<comment type="activity regulation">
    <text evidence="1">Allosterically activated by GTP, when glutamine is the substrate; GTP has no effect on the reaction when ammonia is the substrate. The allosteric effector GTP functions by stabilizing the protein conformation that binds the tetrahedral intermediate(s) formed during glutamine hydrolysis. Inhibited by the product CTP, via allosteric rather than competitive inhibition.</text>
</comment>
<comment type="pathway">
    <text evidence="1">Pyrimidine metabolism; CTP biosynthesis via de novo pathway; CTP from UDP: step 2/2.</text>
</comment>
<comment type="subunit">
    <text evidence="1">Homotetramer.</text>
</comment>
<comment type="miscellaneous">
    <text evidence="1">CTPSs have evolved a hybrid strategy for distinguishing between UTP and CTP. The overlapping regions of the product feedback inhibitory and substrate sites recognize a common feature in both compounds, the triphosphate moiety. To differentiate isosteric substrate and product pyrimidine rings, an additional pocket far from the expected kinase/ligase catalytic site, specifically recognizes the cytosine and ribose portions of the product inhibitor.</text>
</comment>
<comment type="similarity">
    <text evidence="1">Belongs to the CTP synthase family.</text>
</comment>
<protein>
    <recommendedName>
        <fullName evidence="1">CTP synthase</fullName>
        <ecNumber evidence="1">6.3.4.2</ecNumber>
    </recommendedName>
    <alternativeName>
        <fullName evidence="1">Cytidine 5'-triphosphate synthase</fullName>
    </alternativeName>
    <alternativeName>
        <fullName evidence="1">Cytidine triphosphate synthetase</fullName>
        <shortName evidence="1">CTP synthetase</shortName>
        <shortName evidence="1">CTPS</shortName>
    </alternativeName>
    <alternativeName>
        <fullName evidence="1">UTP--ammonia ligase</fullName>
    </alternativeName>
</protein>
<accession>B8E8T0</accession>
<sequence>MTTRYIFVTGGVVSSLGKGIAAASLAAILEARGLNVTIMKLDPYINVDPGTMSPTQHGEVFVTEDGAETDLDLGHYERFIRTKMNRRNNFTTGRIYEEVLRKERRGDYLGATIQVIPHITNAIKEKVLAGGEGHDVAIVEIGGTVGDIESLPFLESIRQLGVELGRDRTLFMHLTLVPFLGAAGEVKTKPTQHSVKELRSIGIAPDVLVCRGDRAIPANEKAKISLFCNVEERAVISLKDVDSIYKIPALLRSQGLDDLVVKRFGLECREADLSEWENVIYQEANPNGEVVIGMVGKYIELPDAYKSVNEALKHAGLKNRVSVTIKYIDSQTVEAKGEEVLQGLDGILVPGGFGERGVEGKILAAKFARENNLPYFGICLGMQVALIEFARNVAGMADAHSTEFNKETPFPVVGLITEWIDEEGNVEQRHEASDLGGTMRLGAQLCHLLEGSKAAQAYKGNSCVERHRHRYEVNNKYRERLEQAGMIFSGLSSDRKLVEMIELKDHPWFVAGQFHPEFTSTPRDGHPLFEGFIAAASAHQKRDLK</sequence>
<name>PYRG_SHEB2</name>
<organism>
    <name type="scientific">Shewanella baltica (strain OS223)</name>
    <dbReference type="NCBI Taxonomy" id="407976"/>
    <lineage>
        <taxon>Bacteria</taxon>
        <taxon>Pseudomonadati</taxon>
        <taxon>Pseudomonadota</taxon>
        <taxon>Gammaproteobacteria</taxon>
        <taxon>Alteromonadales</taxon>
        <taxon>Shewanellaceae</taxon>
        <taxon>Shewanella</taxon>
    </lineage>
</organism>
<keyword id="KW-0067">ATP-binding</keyword>
<keyword id="KW-0315">Glutamine amidotransferase</keyword>
<keyword id="KW-0436">Ligase</keyword>
<keyword id="KW-0460">Magnesium</keyword>
<keyword id="KW-0479">Metal-binding</keyword>
<keyword id="KW-0547">Nucleotide-binding</keyword>
<keyword id="KW-0665">Pyrimidine biosynthesis</keyword>
<reference key="1">
    <citation type="submission" date="2008-12" db="EMBL/GenBank/DDBJ databases">
        <title>Complete sequence of chromosome of Shewanella baltica OS223.</title>
        <authorList>
            <consortium name="US DOE Joint Genome Institute"/>
            <person name="Lucas S."/>
            <person name="Copeland A."/>
            <person name="Lapidus A."/>
            <person name="Glavina del Rio T."/>
            <person name="Dalin E."/>
            <person name="Tice H."/>
            <person name="Bruce D."/>
            <person name="Goodwin L."/>
            <person name="Pitluck S."/>
            <person name="Chertkov O."/>
            <person name="Meincke L."/>
            <person name="Brettin T."/>
            <person name="Detter J.C."/>
            <person name="Han C."/>
            <person name="Kuske C.R."/>
            <person name="Larimer F."/>
            <person name="Land M."/>
            <person name="Hauser L."/>
            <person name="Kyrpides N."/>
            <person name="Ovchinnikova G."/>
            <person name="Brettar I."/>
            <person name="Rodrigues J."/>
            <person name="Konstantinidis K."/>
            <person name="Tiedje J."/>
        </authorList>
    </citation>
    <scope>NUCLEOTIDE SEQUENCE [LARGE SCALE GENOMIC DNA]</scope>
    <source>
        <strain>OS223</strain>
    </source>
</reference>
<dbReference type="EC" id="6.3.4.2" evidence="1"/>
<dbReference type="EMBL" id="CP001252">
    <property type="protein sequence ID" value="ACK45746.1"/>
    <property type="molecule type" value="Genomic_DNA"/>
</dbReference>
<dbReference type="RefSeq" id="WP_012587102.1">
    <property type="nucleotide sequence ID" value="NC_011663.1"/>
</dbReference>
<dbReference type="SMR" id="B8E8T0"/>
<dbReference type="MEROPS" id="C26.964"/>
<dbReference type="KEGG" id="sbp:Sbal223_1236"/>
<dbReference type="HOGENOM" id="CLU_011675_5_0_6"/>
<dbReference type="UniPathway" id="UPA00159">
    <property type="reaction ID" value="UER00277"/>
</dbReference>
<dbReference type="Proteomes" id="UP000002507">
    <property type="component" value="Chromosome"/>
</dbReference>
<dbReference type="GO" id="GO:0005829">
    <property type="term" value="C:cytosol"/>
    <property type="evidence" value="ECO:0007669"/>
    <property type="project" value="TreeGrafter"/>
</dbReference>
<dbReference type="GO" id="GO:0005524">
    <property type="term" value="F:ATP binding"/>
    <property type="evidence" value="ECO:0007669"/>
    <property type="project" value="UniProtKB-KW"/>
</dbReference>
<dbReference type="GO" id="GO:0003883">
    <property type="term" value="F:CTP synthase activity"/>
    <property type="evidence" value="ECO:0007669"/>
    <property type="project" value="UniProtKB-UniRule"/>
</dbReference>
<dbReference type="GO" id="GO:0004359">
    <property type="term" value="F:glutaminase activity"/>
    <property type="evidence" value="ECO:0007669"/>
    <property type="project" value="RHEA"/>
</dbReference>
<dbReference type="GO" id="GO:0042802">
    <property type="term" value="F:identical protein binding"/>
    <property type="evidence" value="ECO:0007669"/>
    <property type="project" value="TreeGrafter"/>
</dbReference>
<dbReference type="GO" id="GO:0046872">
    <property type="term" value="F:metal ion binding"/>
    <property type="evidence" value="ECO:0007669"/>
    <property type="project" value="UniProtKB-KW"/>
</dbReference>
<dbReference type="GO" id="GO:0044210">
    <property type="term" value="P:'de novo' CTP biosynthetic process"/>
    <property type="evidence" value="ECO:0007669"/>
    <property type="project" value="UniProtKB-UniRule"/>
</dbReference>
<dbReference type="GO" id="GO:0019856">
    <property type="term" value="P:pyrimidine nucleobase biosynthetic process"/>
    <property type="evidence" value="ECO:0007669"/>
    <property type="project" value="TreeGrafter"/>
</dbReference>
<dbReference type="CDD" id="cd03113">
    <property type="entry name" value="CTPS_N"/>
    <property type="match status" value="1"/>
</dbReference>
<dbReference type="CDD" id="cd01746">
    <property type="entry name" value="GATase1_CTP_Synthase"/>
    <property type="match status" value="1"/>
</dbReference>
<dbReference type="FunFam" id="3.40.50.300:FF:000009">
    <property type="entry name" value="CTP synthase"/>
    <property type="match status" value="1"/>
</dbReference>
<dbReference type="FunFam" id="3.40.50.880:FF:000002">
    <property type="entry name" value="CTP synthase"/>
    <property type="match status" value="1"/>
</dbReference>
<dbReference type="Gene3D" id="3.40.50.880">
    <property type="match status" value="1"/>
</dbReference>
<dbReference type="Gene3D" id="3.40.50.300">
    <property type="entry name" value="P-loop containing nucleotide triphosphate hydrolases"/>
    <property type="match status" value="1"/>
</dbReference>
<dbReference type="HAMAP" id="MF_01227">
    <property type="entry name" value="PyrG"/>
    <property type="match status" value="1"/>
</dbReference>
<dbReference type="InterPro" id="IPR029062">
    <property type="entry name" value="Class_I_gatase-like"/>
</dbReference>
<dbReference type="InterPro" id="IPR004468">
    <property type="entry name" value="CTP_synthase"/>
</dbReference>
<dbReference type="InterPro" id="IPR017456">
    <property type="entry name" value="CTP_synthase_N"/>
</dbReference>
<dbReference type="InterPro" id="IPR017926">
    <property type="entry name" value="GATASE"/>
</dbReference>
<dbReference type="InterPro" id="IPR033828">
    <property type="entry name" value="GATase1_CTP_Synthase"/>
</dbReference>
<dbReference type="InterPro" id="IPR027417">
    <property type="entry name" value="P-loop_NTPase"/>
</dbReference>
<dbReference type="NCBIfam" id="NF003792">
    <property type="entry name" value="PRK05380.1"/>
    <property type="match status" value="1"/>
</dbReference>
<dbReference type="NCBIfam" id="TIGR00337">
    <property type="entry name" value="PyrG"/>
    <property type="match status" value="1"/>
</dbReference>
<dbReference type="PANTHER" id="PTHR11550">
    <property type="entry name" value="CTP SYNTHASE"/>
    <property type="match status" value="1"/>
</dbReference>
<dbReference type="PANTHER" id="PTHR11550:SF0">
    <property type="entry name" value="CTP SYNTHASE-RELATED"/>
    <property type="match status" value="1"/>
</dbReference>
<dbReference type="Pfam" id="PF06418">
    <property type="entry name" value="CTP_synth_N"/>
    <property type="match status" value="1"/>
</dbReference>
<dbReference type="Pfam" id="PF00117">
    <property type="entry name" value="GATase"/>
    <property type="match status" value="1"/>
</dbReference>
<dbReference type="SUPFAM" id="SSF52317">
    <property type="entry name" value="Class I glutamine amidotransferase-like"/>
    <property type="match status" value="1"/>
</dbReference>
<dbReference type="SUPFAM" id="SSF52540">
    <property type="entry name" value="P-loop containing nucleoside triphosphate hydrolases"/>
    <property type="match status" value="1"/>
</dbReference>
<dbReference type="PROSITE" id="PS51273">
    <property type="entry name" value="GATASE_TYPE_1"/>
    <property type="match status" value="1"/>
</dbReference>
<feature type="chain" id="PRO_1000164959" description="CTP synthase">
    <location>
        <begin position="1"/>
        <end position="545"/>
    </location>
</feature>
<feature type="domain" description="Glutamine amidotransferase type-1" evidence="1">
    <location>
        <begin position="291"/>
        <end position="542"/>
    </location>
</feature>
<feature type="region of interest" description="Amidoligase domain" evidence="1">
    <location>
        <begin position="1"/>
        <end position="266"/>
    </location>
</feature>
<feature type="active site" description="Nucleophile; for glutamine hydrolysis" evidence="1">
    <location>
        <position position="379"/>
    </location>
</feature>
<feature type="active site" evidence="1">
    <location>
        <position position="515"/>
    </location>
</feature>
<feature type="active site" evidence="1">
    <location>
        <position position="517"/>
    </location>
</feature>
<feature type="binding site" evidence="1">
    <location>
        <position position="14"/>
    </location>
    <ligand>
        <name>CTP</name>
        <dbReference type="ChEBI" id="CHEBI:37563"/>
        <note>allosteric inhibitor</note>
    </ligand>
</feature>
<feature type="binding site" evidence="1">
    <location>
        <position position="14"/>
    </location>
    <ligand>
        <name>UTP</name>
        <dbReference type="ChEBI" id="CHEBI:46398"/>
    </ligand>
</feature>
<feature type="binding site" evidence="1">
    <location>
        <begin position="15"/>
        <end position="20"/>
    </location>
    <ligand>
        <name>ATP</name>
        <dbReference type="ChEBI" id="CHEBI:30616"/>
    </ligand>
</feature>
<feature type="binding site" evidence="1">
    <location>
        <position position="72"/>
    </location>
    <ligand>
        <name>ATP</name>
        <dbReference type="ChEBI" id="CHEBI:30616"/>
    </ligand>
</feature>
<feature type="binding site" evidence="1">
    <location>
        <position position="72"/>
    </location>
    <ligand>
        <name>Mg(2+)</name>
        <dbReference type="ChEBI" id="CHEBI:18420"/>
    </ligand>
</feature>
<feature type="binding site" evidence="1">
    <location>
        <position position="140"/>
    </location>
    <ligand>
        <name>Mg(2+)</name>
        <dbReference type="ChEBI" id="CHEBI:18420"/>
    </ligand>
</feature>
<feature type="binding site" evidence="1">
    <location>
        <begin position="147"/>
        <end position="149"/>
    </location>
    <ligand>
        <name>CTP</name>
        <dbReference type="ChEBI" id="CHEBI:37563"/>
        <note>allosteric inhibitor</note>
    </ligand>
</feature>
<feature type="binding site" evidence="1">
    <location>
        <begin position="187"/>
        <end position="192"/>
    </location>
    <ligand>
        <name>CTP</name>
        <dbReference type="ChEBI" id="CHEBI:37563"/>
        <note>allosteric inhibitor</note>
    </ligand>
</feature>
<feature type="binding site" evidence="1">
    <location>
        <begin position="187"/>
        <end position="192"/>
    </location>
    <ligand>
        <name>UTP</name>
        <dbReference type="ChEBI" id="CHEBI:46398"/>
    </ligand>
</feature>
<feature type="binding site" evidence="1">
    <location>
        <position position="223"/>
    </location>
    <ligand>
        <name>CTP</name>
        <dbReference type="ChEBI" id="CHEBI:37563"/>
        <note>allosteric inhibitor</note>
    </ligand>
</feature>
<feature type="binding site" evidence="1">
    <location>
        <position position="223"/>
    </location>
    <ligand>
        <name>UTP</name>
        <dbReference type="ChEBI" id="CHEBI:46398"/>
    </ligand>
</feature>
<feature type="binding site" evidence="1">
    <location>
        <begin position="239"/>
        <end position="241"/>
    </location>
    <ligand>
        <name>ATP</name>
        <dbReference type="ChEBI" id="CHEBI:30616"/>
    </ligand>
</feature>
<feature type="binding site" evidence="1">
    <location>
        <position position="352"/>
    </location>
    <ligand>
        <name>L-glutamine</name>
        <dbReference type="ChEBI" id="CHEBI:58359"/>
    </ligand>
</feature>
<feature type="binding site" evidence="1">
    <location>
        <begin position="380"/>
        <end position="383"/>
    </location>
    <ligand>
        <name>L-glutamine</name>
        <dbReference type="ChEBI" id="CHEBI:58359"/>
    </ligand>
</feature>
<feature type="binding site" evidence="1">
    <location>
        <position position="403"/>
    </location>
    <ligand>
        <name>L-glutamine</name>
        <dbReference type="ChEBI" id="CHEBI:58359"/>
    </ligand>
</feature>
<feature type="binding site" evidence="1">
    <location>
        <position position="470"/>
    </location>
    <ligand>
        <name>L-glutamine</name>
        <dbReference type="ChEBI" id="CHEBI:58359"/>
    </ligand>
</feature>
<gene>
    <name evidence="1" type="primary">pyrG</name>
    <name type="ordered locus">Sbal223_1236</name>
</gene>
<proteinExistence type="inferred from homology"/>